<reference key="1">
    <citation type="journal article" date="2001" name="Nature">
        <title>Genome sequence of Yersinia pestis, the causative agent of plague.</title>
        <authorList>
            <person name="Parkhill J."/>
            <person name="Wren B.W."/>
            <person name="Thomson N.R."/>
            <person name="Titball R.W."/>
            <person name="Holden M.T.G."/>
            <person name="Prentice M.B."/>
            <person name="Sebaihia M."/>
            <person name="James K.D."/>
            <person name="Churcher C.M."/>
            <person name="Mungall K.L."/>
            <person name="Baker S."/>
            <person name="Basham D."/>
            <person name="Bentley S.D."/>
            <person name="Brooks K."/>
            <person name="Cerdeno-Tarraga A.-M."/>
            <person name="Chillingworth T."/>
            <person name="Cronin A."/>
            <person name="Davies R.M."/>
            <person name="Davis P."/>
            <person name="Dougan G."/>
            <person name="Feltwell T."/>
            <person name="Hamlin N."/>
            <person name="Holroyd S."/>
            <person name="Jagels K."/>
            <person name="Karlyshev A.V."/>
            <person name="Leather S."/>
            <person name="Moule S."/>
            <person name="Oyston P.C.F."/>
            <person name="Quail M.A."/>
            <person name="Rutherford K.M."/>
            <person name="Simmonds M."/>
            <person name="Skelton J."/>
            <person name="Stevens K."/>
            <person name="Whitehead S."/>
            <person name="Barrell B.G."/>
        </authorList>
    </citation>
    <scope>NUCLEOTIDE SEQUENCE [LARGE SCALE GENOMIC DNA]</scope>
    <source>
        <strain>CO-92 / Biovar Orientalis</strain>
    </source>
</reference>
<reference key="2">
    <citation type="journal article" date="2002" name="J. Bacteriol.">
        <title>Genome sequence of Yersinia pestis KIM.</title>
        <authorList>
            <person name="Deng W."/>
            <person name="Burland V."/>
            <person name="Plunkett G. III"/>
            <person name="Boutin A."/>
            <person name="Mayhew G.F."/>
            <person name="Liss P."/>
            <person name="Perna N.T."/>
            <person name="Rose D.J."/>
            <person name="Mau B."/>
            <person name="Zhou S."/>
            <person name="Schwartz D.C."/>
            <person name="Fetherston J.D."/>
            <person name="Lindler L.E."/>
            <person name="Brubaker R.R."/>
            <person name="Plano G.V."/>
            <person name="Straley S.C."/>
            <person name="McDonough K.A."/>
            <person name="Nilles M.L."/>
            <person name="Matson J.S."/>
            <person name="Blattner F.R."/>
            <person name="Perry R.D."/>
        </authorList>
    </citation>
    <scope>NUCLEOTIDE SEQUENCE [LARGE SCALE GENOMIC DNA]</scope>
    <source>
        <strain>KIM10+ / Biovar Mediaevalis</strain>
    </source>
</reference>
<reference key="3">
    <citation type="journal article" date="2004" name="DNA Res.">
        <title>Complete genome sequence of Yersinia pestis strain 91001, an isolate avirulent to humans.</title>
        <authorList>
            <person name="Song Y."/>
            <person name="Tong Z."/>
            <person name="Wang J."/>
            <person name="Wang L."/>
            <person name="Guo Z."/>
            <person name="Han Y."/>
            <person name="Zhang J."/>
            <person name="Pei D."/>
            <person name="Zhou D."/>
            <person name="Qin H."/>
            <person name="Pang X."/>
            <person name="Han Y."/>
            <person name="Zhai J."/>
            <person name="Li M."/>
            <person name="Cui B."/>
            <person name="Qi Z."/>
            <person name="Jin L."/>
            <person name="Dai R."/>
            <person name="Chen F."/>
            <person name="Li S."/>
            <person name="Ye C."/>
            <person name="Du Z."/>
            <person name="Lin W."/>
            <person name="Wang J."/>
            <person name="Yu J."/>
            <person name="Yang H."/>
            <person name="Wang J."/>
            <person name="Huang P."/>
            <person name="Yang R."/>
        </authorList>
    </citation>
    <scope>NUCLEOTIDE SEQUENCE [LARGE SCALE GENOMIC DNA]</scope>
    <source>
        <strain>91001 / Biovar Mediaevalis</strain>
    </source>
</reference>
<evidence type="ECO:0000255" key="1">
    <source>
        <dbReference type="HAMAP-Rule" id="MF_00259"/>
    </source>
</evidence>
<gene>
    <name evidence="1" type="primary">gcvT</name>
    <name type="ordered locus">YPO0907</name>
    <name type="ordered locus">y3294</name>
    <name type="ordered locus">YP_3604</name>
</gene>
<feature type="chain" id="PRO_0000122618" description="Aminomethyltransferase">
    <location>
        <begin position="1"/>
        <end position="365"/>
    </location>
</feature>
<organism>
    <name type="scientific">Yersinia pestis</name>
    <dbReference type="NCBI Taxonomy" id="632"/>
    <lineage>
        <taxon>Bacteria</taxon>
        <taxon>Pseudomonadati</taxon>
        <taxon>Pseudomonadota</taxon>
        <taxon>Gammaproteobacteria</taxon>
        <taxon>Enterobacterales</taxon>
        <taxon>Yersiniaceae</taxon>
        <taxon>Yersinia</taxon>
    </lineage>
</organism>
<name>GCST_YERPE</name>
<dbReference type="EC" id="2.1.2.10" evidence="1"/>
<dbReference type="EMBL" id="AL590842">
    <property type="protein sequence ID" value="CAL19574.1"/>
    <property type="molecule type" value="Genomic_DNA"/>
</dbReference>
<dbReference type="EMBL" id="AE009952">
    <property type="protein sequence ID" value="AAM86844.1"/>
    <property type="molecule type" value="Genomic_DNA"/>
</dbReference>
<dbReference type="EMBL" id="AE017042">
    <property type="protein sequence ID" value="AAS63754.1"/>
    <property type="molecule type" value="Genomic_DNA"/>
</dbReference>
<dbReference type="PIR" id="AD0111">
    <property type="entry name" value="AD0111"/>
</dbReference>
<dbReference type="RefSeq" id="WP_002209949.1">
    <property type="nucleotide sequence ID" value="NZ_WUCM01000038.1"/>
</dbReference>
<dbReference type="RefSeq" id="YP_002345955.1">
    <property type="nucleotide sequence ID" value="NC_003143.1"/>
</dbReference>
<dbReference type="SMR" id="Q8ZHI6"/>
<dbReference type="IntAct" id="Q8ZHI6">
    <property type="interactions" value="1"/>
</dbReference>
<dbReference type="STRING" id="214092.YPO0907"/>
<dbReference type="PaxDb" id="214092-YPO0907"/>
<dbReference type="DNASU" id="1148241"/>
<dbReference type="EnsemblBacteria" id="AAS63754">
    <property type="protein sequence ID" value="AAS63754"/>
    <property type="gene ID" value="YP_3604"/>
</dbReference>
<dbReference type="GeneID" id="57973733"/>
<dbReference type="KEGG" id="ype:YPO0907"/>
<dbReference type="KEGG" id="ypk:y3294"/>
<dbReference type="KEGG" id="ypm:YP_3604"/>
<dbReference type="PATRIC" id="fig|214092.21.peg.1181"/>
<dbReference type="eggNOG" id="COG0404">
    <property type="taxonomic scope" value="Bacteria"/>
</dbReference>
<dbReference type="HOGENOM" id="CLU_007884_10_2_6"/>
<dbReference type="OMA" id="MPVQYPA"/>
<dbReference type="OrthoDB" id="9774591at2"/>
<dbReference type="Proteomes" id="UP000000815">
    <property type="component" value="Chromosome"/>
</dbReference>
<dbReference type="Proteomes" id="UP000001019">
    <property type="component" value="Chromosome"/>
</dbReference>
<dbReference type="Proteomes" id="UP000002490">
    <property type="component" value="Chromosome"/>
</dbReference>
<dbReference type="GO" id="GO:0005829">
    <property type="term" value="C:cytosol"/>
    <property type="evidence" value="ECO:0000318"/>
    <property type="project" value="GO_Central"/>
</dbReference>
<dbReference type="GO" id="GO:0005960">
    <property type="term" value="C:glycine cleavage complex"/>
    <property type="evidence" value="ECO:0007669"/>
    <property type="project" value="InterPro"/>
</dbReference>
<dbReference type="GO" id="GO:0004047">
    <property type="term" value="F:aminomethyltransferase activity"/>
    <property type="evidence" value="ECO:0007669"/>
    <property type="project" value="UniProtKB-UniRule"/>
</dbReference>
<dbReference type="GO" id="GO:0008483">
    <property type="term" value="F:transaminase activity"/>
    <property type="evidence" value="ECO:0007669"/>
    <property type="project" value="UniProtKB-KW"/>
</dbReference>
<dbReference type="GO" id="GO:0019464">
    <property type="term" value="P:glycine decarboxylation via glycine cleavage system"/>
    <property type="evidence" value="ECO:0007669"/>
    <property type="project" value="UniProtKB-UniRule"/>
</dbReference>
<dbReference type="FunFam" id="2.40.30.110:FF:000001">
    <property type="entry name" value="Aminomethyltransferase"/>
    <property type="match status" value="1"/>
</dbReference>
<dbReference type="FunFam" id="3.30.70.1400:FF:000001">
    <property type="entry name" value="Aminomethyltransferase"/>
    <property type="match status" value="1"/>
</dbReference>
<dbReference type="FunFam" id="4.10.1250.10:FF:000001">
    <property type="entry name" value="Aminomethyltransferase"/>
    <property type="match status" value="1"/>
</dbReference>
<dbReference type="Gene3D" id="2.40.30.110">
    <property type="entry name" value="Aminomethyltransferase beta-barrel domains"/>
    <property type="match status" value="1"/>
</dbReference>
<dbReference type="Gene3D" id="3.30.70.1400">
    <property type="entry name" value="Aminomethyltransferase beta-barrel domains"/>
    <property type="match status" value="1"/>
</dbReference>
<dbReference type="Gene3D" id="4.10.1250.10">
    <property type="entry name" value="Aminomethyltransferase fragment"/>
    <property type="match status" value="1"/>
</dbReference>
<dbReference type="Gene3D" id="3.30.1360.120">
    <property type="entry name" value="Probable tRNA modification gtpase trme, domain 1"/>
    <property type="match status" value="1"/>
</dbReference>
<dbReference type="HAMAP" id="MF_00259">
    <property type="entry name" value="GcvT"/>
    <property type="match status" value="1"/>
</dbReference>
<dbReference type="InterPro" id="IPR006223">
    <property type="entry name" value="GCS_T"/>
</dbReference>
<dbReference type="InterPro" id="IPR022903">
    <property type="entry name" value="GCS_T_bac"/>
</dbReference>
<dbReference type="InterPro" id="IPR013977">
    <property type="entry name" value="GCST_C"/>
</dbReference>
<dbReference type="InterPro" id="IPR006222">
    <property type="entry name" value="GCV_T_N"/>
</dbReference>
<dbReference type="InterPro" id="IPR028896">
    <property type="entry name" value="GcvT/YgfZ/DmdA"/>
</dbReference>
<dbReference type="InterPro" id="IPR029043">
    <property type="entry name" value="GcvT/YgfZ_C"/>
</dbReference>
<dbReference type="InterPro" id="IPR027266">
    <property type="entry name" value="TrmE/GcvT_dom1"/>
</dbReference>
<dbReference type="NCBIfam" id="TIGR00528">
    <property type="entry name" value="gcvT"/>
    <property type="match status" value="1"/>
</dbReference>
<dbReference type="NCBIfam" id="NF001567">
    <property type="entry name" value="PRK00389.1"/>
    <property type="match status" value="1"/>
</dbReference>
<dbReference type="PANTHER" id="PTHR43757">
    <property type="entry name" value="AMINOMETHYLTRANSFERASE"/>
    <property type="match status" value="1"/>
</dbReference>
<dbReference type="PANTHER" id="PTHR43757:SF2">
    <property type="entry name" value="AMINOMETHYLTRANSFERASE, MITOCHONDRIAL"/>
    <property type="match status" value="1"/>
</dbReference>
<dbReference type="Pfam" id="PF01571">
    <property type="entry name" value="GCV_T"/>
    <property type="match status" value="1"/>
</dbReference>
<dbReference type="Pfam" id="PF08669">
    <property type="entry name" value="GCV_T_C"/>
    <property type="match status" value="1"/>
</dbReference>
<dbReference type="PIRSF" id="PIRSF006487">
    <property type="entry name" value="GcvT"/>
    <property type="match status" value="1"/>
</dbReference>
<dbReference type="SUPFAM" id="SSF101790">
    <property type="entry name" value="Aminomethyltransferase beta-barrel domain"/>
    <property type="match status" value="1"/>
</dbReference>
<dbReference type="SUPFAM" id="SSF103025">
    <property type="entry name" value="Folate-binding domain"/>
    <property type="match status" value="1"/>
</dbReference>
<proteinExistence type="inferred from homology"/>
<comment type="function">
    <text evidence="1">The glycine cleavage system catalyzes the degradation of glycine.</text>
</comment>
<comment type="catalytic activity">
    <reaction evidence="1">
        <text>N(6)-[(R)-S(8)-aminomethyldihydrolipoyl]-L-lysyl-[protein] + (6S)-5,6,7,8-tetrahydrofolate = N(6)-[(R)-dihydrolipoyl]-L-lysyl-[protein] + (6R)-5,10-methylene-5,6,7,8-tetrahydrofolate + NH4(+)</text>
        <dbReference type="Rhea" id="RHEA:16945"/>
        <dbReference type="Rhea" id="RHEA-COMP:10475"/>
        <dbReference type="Rhea" id="RHEA-COMP:10492"/>
        <dbReference type="ChEBI" id="CHEBI:15636"/>
        <dbReference type="ChEBI" id="CHEBI:28938"/>
        <dbReference type="ChEBI" id="CHEBI:57453"/>
        <dbReference type="ChEBI" id="CHEBI:83100"/>
        <dbReference type="ChEBI" id="CHEBI:83143"/>
        <dbReference type="EC" id="2.1.2.10"/>
    </reaction>
</comment>
<comment type="subunit">
    <text evidence="1">The glycine cleavage system is composed of four proteins: P, T, L and H.</text>
</comment>
<comment type="similarity">
    <text evidence="1">Belongs to the GcvT family.</text>
</comment>
<keyword id="KW-0032">Aminotransferase</keyword>
<keyword id="KW-1185">Reference proteome</keyword>
<keyword id="KW-0808">Transferase</keyword>
<accession>Q8ZHI6</accession>
<accession>Q0WID3</accession>
<sequence>MAKQTPLYDQHVACGARMVDFHGWMMPLHYGSQIDEHHFVRQDAGMFDVSHMTIVDLHGNRTREFLRYLLANDVAKLTQPGKALYTGMLNESGGVIDDLIVYFLSEDYFRLVVNSATRDKDLAWISQHAEPYQVEVTVRDDLALIAVQGPQAQQKVATLLTTEQQQAIAGMKPFFGIQTGDLFIATTGYTGEAGYEIALPKQQVVAFWQQLLAAGVKPAGLGARDTLRLEAGMNLYGQEMDEKTSPLAANMGWTVAWQPEDRQFIGRAALERQRMKGTEQLVGLIMTEKGVLRNELPVYFFDAAGNQHVGVITSGSFSPTLGFSIALARVPAGIGEHAVVQIRNREMPVRVTKPGFVRAGKAIVL</sequence>
<protein>
    <recommendedName>
        <fullName evidence="1">Aminomethyltransferase</fullName>
        <ecNumber evidence="1">2.1.2.10</ecNumber>
    </recommendedName>
    <alternativeName>
        <fullName evidence="1">Glycine cleavage system T protein</fullName>
    </alternativeName>
</protein>